<dbReference type="EMBL" id="U00096">
    <property type="protein sequence ID" value="AAC74796.1"/>
    <property type="molecule type" value="Genomic_DNA"/>
</dbReference>
<dbReference type="EMBL" id="AP009048">
    <property type="protein sequence ID" value="BAE76510.1"/>
    <property type="molecule type" value="Genomic_DNA"/>
</dbReference>
<dbReference type="PIR" id="F64931">
    <property type="entry name" value="F64931"/>
</dbReference>
<dbReference type="RefSeq" id="NP_416240.1">
    <property type="nucleotide sequence ID" value="NC_000913.3"/>
</dbReference>
<dbReference type="RefSeq" id="WP_000222163.1">
    <property type="nucleotide sequence ID" value="NZ_SSZK01000001.1"/>
</dbReference>
<dbReference type="BioGRID" id="4263400">
    <property type="interactions" value="7"/>
</dbReference>
<dbReference type="DIP" id="DIP-12776N"/>
<dbReference type="FunCoup" id="P76208">
    <property type="interactions" value="23"/>
</dbReference>
<dbReference type="IntAct" id="P76208">
    <property type="interactions" value="1"/>
</dbReference>
<dbReference type="STRING" id="511145.b1726"/>
<dbReference type="jPOST" id="P76208"/>
<dbReference type="PaxDb" id="511145-b1726"/>
<dbReference type="EnsemblBacteria" id="AAC74796">
    <property type="protein sequence ID" value="AAC74796"/>
    <property type="gene ID" value="b1726"/>
</dbReference>
<dbReference type="GeneID" id="945140"/>
<dbReference type="KEGG" id="ecj:JW1715"/>
<dbReference type="KEGG" id="eco:b1726"/>
<dbReference type="KEGG" id="ecoc:C3026_09870"/>
<dbReference type="PATRIC" id="fig|1411691.4.peg.530"/>
<dbReference type="EchoBASE" id="EB3743"/>
<dbReference type="eggNOG" id="ENOG502Z8K9">
    <property type="taxonomic scope" value="Bacteria"/>
</dbReference>
<dbReference type="HOGENOM" id="CLU_129278_0_0_6"/>
<dbReference type="InParanoid" id="P76208"/>
<dbReference type="OMA" id="MVRFNTP"/>
<dbReference type="OrthoDB" id="6870983at2"/>
<dbReference type="PhylomeDB" id="P76208"/>
<dbReference type="BioCyc" id="EcoCyc:G6931-MONOMER"/>
<dbReference type="PRO" id="PR:P76208"/>
<dbReference type="Proteomes" id="UP000000625">
    <property type="component" value="Chromosome"/>
</dbReference>
<dbReference type="GO" id="GO:0005886">
    <property type="term" value="C:plasma membrane"/>
    <property type="evidence" value="ECO:0000314"/>
    <property type="project" value="EcoCyc"/>
</dbReference>
<dbReference type="InterPro" id="IPR025229">
    <property type="entry name" value="YniB-like"/>
</dbReference>
<dbReference type="Pfam" id="PF14002">
    <property type="entry name" value="YniB"/>
    <property type="match status" value="1"/>
</dbReference>
<comment type="subcellular location">
    <subcellularLocation>
        <location evidence="2">Cell membrane</location>
        <topology evidence="2">Multi-pass membrane protein</topology>
    </subcellularLocation>
</comment>
<comment type="similarity">
    <text evidence="2">To Y.pestis YfeE.</text>
</comment>
<name>YNIB_ECOLI</name>
<protein>
    <recommendedName>
        <fullName>Uncharacterized protein YniB</fullName>
    </recommendedName>
</protein>
<reference key="1">
    <citation type="journal article" date="1997" name="Science">
        <title>The complete genome sequence of Escherichia coli K-12.</title>
        <authorList>
            <person name="Blattner F.R."/>
            <person name="Plunkett G. III"/>
            <person name="Bloch C.A."/>
            <person name="Perna N.T."/>
            <person name="Burland V."/>
            <person name="Riley M."/>
            <person name="Collado-Vides J."/>
            <person name="Glasner J.D."/>
            <person name="Rode C.K."/>
            <person name="Mayhew G.F."/>
            <person name="Gregor J."/>
            <person name="Davis N.W."/>
            <person name="Kirkpatrick H.A."/>
            <person name="Goeden M.A."/>
            <person name="Rose D.J."/>
            <person name="Mau B."/>
            <person name="Shao Y."/>
        </authorList>
    </citation>
    <scope>NUCLEOTIDE SEQUENCE [LARGE SCALE GENOMIC DNA]</scope>
    <source>
        <strain>K12 / MG1655 / ATCC 47076</strain>
    </source>
</reference>
<reference key="2">
    <citation type="journal article" date="2006" name="Mol. Syst. Biol.">
        <title>Highly accurate genome sequences of Escherichia coli K-12 strains MG1655 and W3110.</title>
        <authorList>
            <person name="Hayashi K."/>
            <person name="Morooka N."/>
            <person name="Yamamoto Y."/>
            <person name="Fujita K."/>
            <person name="Isono K."/>
            <person name="Choi S."/>
            <person name="Ohtsubo E."/>
            <person name="Baba T."/>
            <person name="Wanner B.L."/>
            <person name="Mori H."/>
            <person name="Horiuchi T."/>
        </authorList>
    </citation>
    <scope>NUCLEOTIDE SEQUENCE [LARGE SCALE GENOMIC DNA]</scope>
    <source>
        <strain>K12 / W3110 / ATCC 27325 / DSM 5911</strain>
    </source>
</reference>
<feature type="chain" id="PRO_0000169000" description="Uncharacterized protein YniB">
    <location>
        <begin position="1"/>
        <end position="178"/>
    </location>
</feature>
<feature type="transmembrane region" description="Helical" evidence="1">
    <location>
        <begin position="15"/>
        <end position="35"/>
    </location>
</feature>
<feature type="transmembrane region" description="Helical" evidence="1">
    <location>
        <begin position="80"/>
        <end position="100"/>
    </location>
</feature>
<feature type="transmembrane region" description="Helical" evidence="1">
    <location>
        <begin position="158"/>
        <end position="178"/>
    </location>
</feature>
<proteinExistence type="predicted"/>
<keyword id="KW-1003">Cell membrane</keyword>
<keyword id="KW-0472">Membrane</keyword>
<keyword id="KW-1185">Reference proteome</keyword>
<keyword id="KW-0812">Transmembrane</keyword>
<keyword id="KW-1133">Transmembrane helix</keyword>
<evidence type="ECO:0000255" key="1"/>
<evidence type="ECO:0000305" key="2"/>
<accession>P76208</accession>
<accession>Q2MB46</accession>
<sequence length="178" mass="20367">MTYQQAGRIAVLKRILGWVIFIPALISTLISLLKFMNTRQENKEGINAVMLDFTHVMIDMMQANTPFLNLFWYNSPTPNFNGGVNVMFWVIFILIFVGLALQDSGARMSRQARFLREGVEDQLILEKAKGEEGLTREQIESRIVVPHHTIFLQFFSLYILPVICIAAGYVFFSLLGFI</sequence>
<gene>
    <name type="primary">yniB</name>
    <name type="ordered locus">b1726</name>
    <name type="ordered locus">JW1715</name>
</gene>
<organism>
    <name type="scientific">Escherichia coli (strain K12)</name>
    <dbReference type="NCBI Taxonomy" id="83333"/>
    <lineage>
        <taxon>Bacteria</taxon>
        <taxon>Pseudomonadati</taxon>
        <taxon>Pseudomonadota</taxon>
        <taxon>Gammaproteobacteria</taxon>
        <taxon>Enterobacterales</taxon>
        <taxon>Enterobacteriaceae</taxon>
        <taxon>Escherichia</taxon>
    </lineage>
</organism>